<name>TXH4_CYRSC</name>
<keyword id="KW-0002">3D-structure</keyword>
<keyword id="KW-0027">Amidation</keyword>
<keyword id="KW-0903">Direct protein sequencing</keyword>
<keyword id="KW-1015">Disulfide bond</keyword>
<keyword id="KW-0872">Ion channel impairing toxin</keyword>
<keyword id="KW-0960">Knottin</keyword>
<keyword id="KW-0528">Neurotoxin</keyword>
<keyword id="KW-0638">Presynaptic neurotoxin</keyword>
<keyword id="KW-0873">Pyrrolidone carboxylic acid</keyword>
<keyword id="KW-0964">Secreted</keyword>
<keyword id="KW-0732">Signal</keyword>
<keyword id="KW-0800">Toxin</keyword>
<keyword id="KW-0738">Voltage-gated sodium channel impairing toxin</keyword>
<evidence type="ECO:0000255" key="1"/>
<evidence type="ECO:0000269" key="2">
    <source>
    </source>
</evidence>
<evidence type="ECO:0000269" key="3">
    <source>
    </source>
</evidence>
<evidence type="ECO:0000269" key="4">
    <source>
    </source>
</evidence>
<evidence type="ECO:0000269" key="5">
    <source>
    </source>
</evidence>
<evidence type="ECO:0000269" key="6">
    <source>
    </source>
</evidence>
<evidence type="ECO:0000269" key="7">
    <source>
    </source>
</evidence>
<evidence type="ECO:0000269" key="8">
    <source>
    </source>
</evidence>
<evidence type="ECO:0000269" key="9">
    <source>
    </source>
</evidence>
<evidence type="ECO:0000269" key="10">
    <source>
    </source>
</evidence>
<evidence type="ECO:0000269" key="11">
    <source>
    </source>
</evidence>
<evidence type="ECO:0000269" key="12">
    <source>
    </source>
</evidence>
<evidence type="ECO:0000269" key="13">
    <source>
    </source>
</evidence>
<evidence type="ECO:0000303" key="14">
    <source>
    </source>
</evidence>
<evidence type="ECO:0000303" key="15">
    <source>
    </source>
</evidence>
<evidence type="ECO:0000303" key="16">
    <source>
    </source>
</evidence>
<evidence type="ECO:0000305" key="17"/>
<evidence type="ECO:0000305" key="18">
    <source>
    </source>
</evidence>
<evidence type="ECO:0000305" key="19">
    <source>
    </source>
</evidence>
<evidence type="ECO:0000305" key="20">
    <source>
    </source>
</evidence>
<evidence type="ECO:0000312" key="21">
    <source>
        <dbReference type="EMBL" id="ABY77744.1"/>
    </source>
</evidence>
<evidence type="ECO:0000312" key="22">
    <source>
        <dbReference type="EMBL" id="ABY77745.1"/>
    </source>
</evidence>
<evidence type="ECO:0000312" key="23">
    <source>
        <dbReference type="EMBL" id="ABY77746.1"/>
    </source>
</evidence>
<evidence type="ECO:0000312" key="24">
    <source>
        <dbReference type="PDB" id="1MB6"/>
    </source>
</evidence>
<evidence type="ECO:0000312" key="25">
    <source>
        <dbReference type="PDB" id="2M4X"/>
    </source>
</evidence>
<evidence type="ECO:0000312" key="26">
    <source>
        <dbReference type="PDB" id="5TLR"/>
    </source>
</evidence>
<evidence type="ECO:0007829" key="27">
    <source>
        <dbReference type="PDB" id="2M4Z"/>
    </source>
</evidence>
<evidence type="ECO:0007829" key="28">
    <source>
        <dbReference type="PDB" id="6W6O"/>
    </source>
</evidence>
<comment type="function">
    <text evidence="2 3 4 5 6 7 8 10 11 13">This lethal neurotoxin (without cyclization at position 53) inhibits neuronal voltage-gated sodium channel Nav1.2/SCN2A (IC(50)=10-150 nM), rNav1.3/SCN3A (IC(50)=338 nM), Nav1.6/SCN8A (IC(50)=117 nM), and hNav1.7/SCN9A (IC(50)=9.6-33 nM) (PubMed:18628201, PubMed:20855463, PubMed:23760503, PubMed:25658507, PubMed:29703751, PubMed:31234412). It inhibits activation of sodium channel by trapping the voltage sensor of domain II (DIIS4) in the closed configuration (PubMed:18628201, PubMed:23760503). The toxin neither shifts the Nav1.7/SCN9A activation curve nor modifies the slope factor (PubMed:20855463). It does not slow fast-inactivation of hNav1.7/SCN9A channels (PubMed:20855463). In addition, it has only a weak affinity for lipid membranes (PubMed:18054060, PubMed:28115115, PubMed:29703751). This toxin also exists with a pyroglutamate at position 53 (PubMed:23826086). The sole difference observed between modified (mHwTx-IV) and unmodified toxins is that moderate or high depolarization voltages (200 mV) permit the unmodified toxin to dissociate, whereas mHwTx-IV toxin does not dissociate, even at high depolarization voltages (PubMed:23826086). These data indicate that mHwTx-IV strongly binds to voltage sensor of sodium channel even at extreme depolarization voltages (PubMed:23826086).</text>
</comment>
<comment type="subcellular location">
    <subcellularLocation>
        <location evidence="2">Secreted</location>
    </subcellularLocation>
</comment>
<comment type="tissue specificity">
    <text evidence="18">Expressed by the venom gland.</text>
</comment>
<comment type="domain">
    <text evidence="2 8 11">The presence of a 'disulfide through disulfide knot' structurally defines this protein as a knottin.</text>
</comment>
<comment type="PTM">
    <text evidence="9 11">Two forms of huwentoxin-IV exist in the venom of H.schmidti, a non-N-terminally modified (HwTx-IV) and a naturally modified peptide with pyroglutamic acid residue at position 53 (mHwTx-IV). mHwTx-IV shows no observable difference with the unmodified toxin when applied to the TTX-S sodium channel of DRG neuron (IC(50)~50 nM) or when tested on hNav1.7/SCN9A (IC(50)=30.8 nM) (PubMed:23826086, PubMed:28115115). In addition, similarly to the unmodified toxin, mHwTx-IV has only a weak affinity for lipid membranes (PubMed:28115115). However, in contrast with HwTx-IV, which dissociates at moderate and high depolarization voltages (50-200 mV), mHwTx-IV inhibition of TTX-sensitive sodium channels is not reversed by strong depolarization voltages (PubMed:23826086).</text>
</comment>
<comment type="mass spectrometry">
    <text>mhuwentoxin-IV (with pyrrolidone carboxylic acid (Glu) at position 53).</text>
</comment>
<comment type="mass spectrometry">
    <text>huwentoxin-IV (with unmodified Glu at position 53).</text>
</comment>
<comment type="mass spectrometry">
    <text>huwentoxin-IV (with unmodified Glu at position 53).</text>
</comment>
<comment type="miscellaneous">
    <text evidence="4 10 13">Shows a weak or no inhibition on rNav1.4/SCN4A (IC(50)=3.9-&gt;10 uM) and hNav1.5/SCN5A sodium channels (IC(50)=&gt;10-25 uM) (PubMed:18628201, PubMed:25658507). This toxin has also been shown to weakly inhibit Kv11.1/KCNH2/ERG1, Kv1.2/KCNA2 and Kv1.3/KCNA3 (PubMed:29483648).</text>
</comment>
<comment type="similarity">
    <text evidence="17">Belongs to the neurotoxin 10 (Hwtx-1) family. 22 (Htx-4) subfamily.</text>
</comment>
<reference key="1">
    <citation type="journal article" date="2003" name="Toxicon">
        <title>cDNA sequence analysis of seven peptide toxins from the spider Selenocosmia huwena.</title>
        <authorList>
            <person name="Diao J."/>
            <person name="Lin Y."/>
            <person name="Tang J."/>
            <person name="Liang S.-P."/>
        </authorList>
    </citation>
    <scope>NUCLEOTIDE SEQUENCE [MRNA]</scope>
    <source>
        <tissue>Venom gland</tissue>
    </source>
</reference>
<reference key="2">
    <citation type="journal article" date="2008" name="Toxicon">
        <title>Molecular diversification based on analysis of expressed sequence tags from the venom glands of the Chinese bird spider Ornithoctonus huwena.</title>
        <authorList>
            <person name="Jiang L."/>
            <person name="Peng L."/>
            <person name="Chen J."/>
            <person name="Zhang Y."/>
            <person name="Xiong X."/>
            <person name="Liang S."/>
        </authorList>
    </citation>
    <scope>NUCLEOTIDE SEQUENCE [MRNA] OF 4-89</scope>
    <source>
        <tissue>Venom gland</tissue>
    </source>
</reference>
<reference key="3">
    <citation type="journal article" date="2002" name="J. Biol. Chem.">
        <title>Function and solution structure of huwentoxin-IV, a potent neuronal tetrodotoxin (TTX)-sensitive sodium channel antagonist from Chinese bird spider Selenocosmia huwena.</title>
        <authorList>
            <person name="Peng K."/>
            <person name="Shu Q."/>
            <person name="Liang S.-P."/>
        </authorList>
    </citation>
    <scope>PROTEIN SEQUENCE OF 53-87</scope>
    <scope>STRUCTURE BY NMR OF 53-87</scope>
    <scope>FUNCTION</scope>
    <scope>DISULFIDE BONDS</scope>
    <scope>AMIDATION AT ILE-87</scope>
    <scope>SUBCELLULAR LOCATION</scope>
    <source>
        <tissue>Venom</tissue>
    </source>
</reference>
<reference key="4">
    <citation type="journal article" date="2013" name="PLoS ONE">
        <title>Native pyroglutamation of huwentoxin-IV: a post-translational modification that increases the trapping ability to the sodium channel.</title>
        <authorList>
            <person name="Rong M."/>
            <person name="Duan Z."/>
            <person name="Chen J."/>
            <person name="Li J."/>
            <person name="Xiao Y."/>
            <person name="Liang S."/>
        </authorList>
    </citation>
    <scope>PROTEIN SEQUENCE OF 53-59</scope>
    <scope>PYROGLUTAMATE FORMATION AT GLU-53</scope>
    <scope>MASS SPECTROMETRY</scope>
    <source>
        <tissue>Venom</tissue>
    </source>
</reference>
<reference key="5">
    <citation type="journal article" date="2008" name="J. Biol. Chem.">
        <title>Tarantula huwentoxin-IV inhibits neuronal sodium channels by binding to receptor site 4 and trapping the domain II voltage sensor in the closed configuration.</title>
        <authorList>
            <person name="Xiao Y."/>
            <person name="Bingham J.-P."/>
            <person name="Zhu W."/>
            <person name="Moczydlowski E."/>
            <person name="Liang S."/>
            <person name="Cummins T.R."/>
        </authorList>
    </citation>
    <scope>FUNCTION</scope>
    <source>
        <tissue>Venom</tissue>
    </source>
</reference>
<reference key="6">
    <citation type="journal article" date="2008" name="Toxicon">
        <title>Synthesis and characterization of huwentoxin-IV, a neurotoxin inhibiting central neuronal sodium channels.</title>
        <authorList>
            <person name="Xiao Y."/>
            <person name="Luo X."/>
            <person name="Kuang F."/>
            <person name="Deng M."/>
            <person name="Wang M."/>
            <person name="Zeng X."/>
            <person name="Liang S."/>
        </authorList>
    </citation>
    <scope>FUNCTION</scope>
    <scope>SYNTHESIS OF 53-87</scope>
    <scope>MASS SPECTROMETRY</scope>
    <source>
        <tissue>Venom</tissue>
    </source>
</reference>
<reference key="7">
    <citation type="journal article" date="2010" name="Mol. Pharmacol.">
        <title>The tarantula toxins ProTx-II and huwentoxin-IV differentially interact with human Nav1.7 voltage sensors to inhibit channel activation and inactivation.</title>
        <authorList>
            <person name="Xiao Y."/>
            <person name="Blumenthal K."/>
            <person name="Jackson J.O. II"/>
            <person name="Liang S."/>
            <person name="Cummins T.R."/>
        </authorList>
    </citation>
    <scope>FUNCTION</scope>
</reference>
<reference key="8">
    <citation type="journal article" date="2011" name="J. Biol. Chem.">
        <title>Common molecular determinants of tarantula huwentoxin-IV inhibition of Na+ channel voltage sensors in domains II and IV.</title>
        <authorList>
            <person name="Xiao Y."/>
            <person name="Jackson J.O. II"/>
            <person name="Liang S."/>
            <person name="Cummins T.R."/>
        </authorList>
    </citation>
    <scope>FUNCTION</scope>
</reference>
<reference key="9">
    <citation type="journal article" date="2013" name="Peptides">
        <title>Potency optimization of Huwentoxin-IV on hNav1.7: a neurotoxin TTX-S sodium-channel antagonist from the venom of the Chinese bird-eating spider Selenocosmia huwena.</title>
        <authorList>
            <person name="Revell J.D."/>
            <person name="Lund P.E."/>
            <person name="Linley J.E."/>
            <person name="Metcalfe J."/>
            <person name="Burmeister N."/>
            <person name="Sridharan S."/>
            <person name="Jones C."/>
            <person name="Jermutus L."/>
            <person name="Bednarek M.A."/>
        </authorList>
    </citation>
    <scope>FUNCTION</scope>
    <scope>SYNTHESIS OF 53-87</scope>
    <scope>MUTAGENESIS OF GLU-53; GLU-56 AND TYR-85</scope>
</reference>
<reference key="10">
    <citation type="journal article" date="2015" name="J. Med. Chem.">
        <title>Engineering potent and selective analogues of GpTx-1, a tarantula venom peptide antagonist of the Na(V)1.7 sodium channel.</title>
        <authorList>
            <person name="Murray J.K."/>
            <person name="Ligutti J."/>
            <person name="Liu D."/>
            <person name="Zou A."/>
            <person name="Poppe L."/>
            <person name="Li H."/>
            <person name="Andrews K.L."/>
            <person name="Moyer B.D."/>
            <person name="McDonough S.I."/>
            <person name="Favreau P."/>
            <person name="Stoecklin R."/>
            <person name="Miranda L.P."/>
        </authorList>
    </citation>
    <scope>FUNCTION</scope>
</reference>
<reference key="11">
    <citation type="journal article" date="2018" name="J. Biol. Chem.">
        <title>Gating modifier toxins isolated from spider venom: modulation of voltage-gated sodium channels and the role of lipid membranes.</title>
        <authorList>
            <person name="Agwa A.J."/>
            <person name="Peigneur S."/>
            <person name="Chow C.Y."/>
            <person name="Lawrence N."/>
            <person name="Craik D.J."/>
            <person name="Tytgat J."/>
            <person name="King G.F."/>
            <person name="Henriques S.T."/>
            <person name="Schroeder C.I."/>
        </authorList>
    </citation>
    <scope>FUNCTION</scope>
    <scope>SYNTHESIS</scope>
</reference>
<reference key="12">
    <citation type="journal article" date="2018" name="Nat. Struct. Mol. Biol.">
        <title>Screening, large-scale production and structure-based classification of cystine-dense peptides.</title>
        <authorList>
            <person name="Correnti C.E."/>
            <person name="Gewe M.M."/>
            <person name="Mehlin C."/>
            <person name="Bandaranayake A.D."/>
            <person name="Johnsen W.A."/>
            <person name="Rupert P.B."/>
            <person name="Brusniak M.Y."/>
            <person name="Clarke M."/>
            <person name="Burke S.E."/>
            <person name="De Van Der Schueren W."/>
            <person name="Pilat K."/>
            <person name="Turnbaugh S.M."/>
            <person name="May D."/>
            <person name="Watson A."/>
            <person name="Chan M.K."/>
            <person name="Bahl C.D."/>
            <person name="Olson J.M."/>
            <person name="Strong R.K."/>
        </authorList>
    </citation>
    <scope>FUNCTION</scope>
    <scope>SYNTHESIS OF 53-87</scope>
</reference>
<reference key="13">
    <citation type="journal article" date="2019" name="Toxins">
        <title>Chemical synthesis, proper folding, Nav channel selectivity profile and analgesic properties of the spider peptide Phlotoxin 1.</title>
        <authorList>
            <person name="Nicolas S."/>
            <person name="Zoukimian C."/>
            <person name="Bosmans F."/>
            <person name="Montnach J."/>
            <person name="Diochot S."/>
            <person name="Cuypers E."/>
            <person name="De Waard S."/>
            <person name="Beroud R."/>
            <person name="Mebs D."/>
            <person name="Craik D."/>
            <person name="Boturyn D."/>
            <person name="Lazdunski M."/>
            <person name="Tytgat J."/>
            <person name="De Waard M."/>
        </authorList>
    </citation>
    <scope>FUNCTION ON NAV1.7/SCN9A</scope>
    <scope>SYNTHESIS OF 53-87</scope>
</reference>
<reference key="14">
    <citation type="journal article" date="2013" name="J. Biol. Chem.">
        <title>Analysis of the structural and molecular basis of voltage-sensitive sodium channel inhibition by the spider toxin huwentoxin-IV (mu-TRTX-Hh2a).</title>
        <authorList>
            <person name="Minassian N.A."/>
            <person name="Gibbs A."/>
            <person name="Shih A.Y."/>
            <person name="Liu Y."/>
            <person name="Neff R.A."/>
            <person name="Sutton S.W."/>
            <person name="Mirzadegan T."/>
            <person name="Connor J."/>
            <person name="Fellows R."/>
            <person name="Husovsky M."/>
            <person name="Nelson S."/>
            <person name="Hunter M.J."/>
            <person name="Flinspach M."/>
            <person name="Wickenden A.D."/>
        </authorList>
    </citation>
    <scope>STRUCTURE BY NMR OF 53-87</scope>
    <scope>FUNCTION</scope>
    <scope>MUTAGENESIS OF GLU-56; PHE-58; PRO-63; ASP-66; LEU-74; SER-77; TRP-82; LYS-84; TYR-85 AND ILE-87</scope>
</reference>
<reference key="15">
    <citation type="journal article" date="2017" name="Biochim. Biophys. Acta">
        <title>Spider peptide toxin HwTx-IV engineered to bind to lipid membranes has an increased inhibitory potency at human voltage-gated sodium channel hNaV1.7.</title>
        <authorList>
            <person name="Agwa A.J."/>
            <person name="Lawrence N."/>
            <person name="Deplazes E."/>
            <person name="Cheneval O."/>
            <person name="Chen R.M."/>
            <person name="Craik D.J."/>
            <person name="Schroeder C.I."/>
            <person name="Henriques S.T."/>
        </authorList>
    </citation>
    <scope>STRUCTURE BY NMR OF 53-87 OF HUWENTOXIN-IV; M-HUWENTOXIN-IV AND G-HUWENTOXIN-IV</scope>
    <scope>FUNCTION</scope>
    <scope>SYNTHESIS OF 53-87 (HUWENTOXIN-IV; MHUWENTOXIN-IV AND G-HUWENTOXIN-IV)</scope>
    <scope>MUTAGENESIS OF GLU-53; GLU-56; PHE-58 AND TYR-85</scope>
</reference>
<reference key="16">
    <citation type="journal article" date="2017" name="PLoS ONE">
        <title>The structure, dynamics and selectivity profile of a NaV1.7 potency-optimised huwentoxin-IV variant.</title>
        <authorList>
            <person name="Rahnama S."/>
            <person name="Deuis J.R."/>
            <person name="Cardoso F.C."/>
            <person name="Ramanujam V."/>
            <person name="Lewis R.J."/>
            <person name="Rash L.D."/>
            <person name="King G.F."/>
            <person name="Vetter I."/>
            <person name="Mobli M."/>
        </authorList>
    </citation>
    <scope>STRUCTURE BY NMR OF M3-HUWENTOXIN-IV MUTANT</scope>
    <scope>MUTAGENESIS OF GLU-53; GLU-56 AND TYR-85</scope>
</reference>
<reference key="17">
    <citation type="journal article" date="2019" name="Science">
        <title>Structures of human Nav1.7 channel in complex with auxiliary subunits and animal toxins.</title>
        <authorList>
            <person name="Shen H."/>
            <person name="Liu D."/>
            <person name="Wu K."/>
            <person name="Lei J."/>
            <person name="Yan N."/>
        </authorList>
    </citation>
    <scope>STRUCTURE BY ELECTRON MICROSCOPY (3.2 ANGSTROMS) IN COMPLEX WITH SCN9A; SCN1B AND SCN2B</scope>
</reference>
<sequence>MVNMKASMFLALAGLVLLFVVCYASESEEKEFSNELLSSVLAVDDNSKGEERECLEIFKACNPSNDQCCKSSKLVCSRKTRWCKYQIGK</sequence>
<accession>P83303</accession>
<accession>B3FIU7</accession>
<accession>B3FIU8</accession>
<accession>B3FIU9</accession>
<accession>Q86C52</accession>
<feature type="signal peptide" evidence="1">
    <location>
        <begin position="1"/>
        <end position="24"/>
    </location>
</feature>
<feature type="propeptide" id="PRO_0000035560" evidence="2">
    <location>
        <begin position="25"/>
        <end position="52"/>
    </location>
</feature>
<feature type="chain" id="PRO_0000035561" description="Huwentoxin-IV" evidence="2">
    <location>
        <begin position="53"/>
        <end position="87"/>
    </location>
</feature>
<feature type="site" description="Binds to the extracellular loop of voltage sensor domain II of sodium channels (Nav1.2/SCN2A and Nav1.7/SCN9A)" evidence="20">
    <location>
        <position position="58"/>
    </location>
</feature>
<feature type="site" description="Binds to the extracellular loop of voltage sensor domain II of sodium channels (Nav1.2/SCN2A and Nav1.7/SCN9A)" evidence="20">
    <location>
        <position position="78"/>
    </location>
</feature>
<feature type="site" description="Binds to the extracellular loop of voltage sensor domain II of sodium channels (Nav1.2/SCN2A and Nav1.7/SCN9A)" evidence="20">
    <location>
        <position position="79"/>
    </location>
</feature>
<feature type="site" description="Binds to the extracellular loop of voltage sensor domain II of sodium channels (Nav1.2/SCN2A and Nav1.7/SCN9A)" evidence="20">
    <location>
        <position position="82"/>
    </location>
</feature>
<feature type="site" description="Binds to the extracellular loop of voltage sensor domain II of sodium channels (Nav1.2/SCN2A and Nav1.7/SCN9A)" evidence="20">
    <location>
        <position position="84"/>
    </location>
</feature>
<feature type="modified residue" description="Pyrrolidone carboxylic acid (Glu); partial" evidence="9">
    <location>
        <position position="53"/>
    </location>
</feature>
<feature type="modified residue" description="Isoleucine amide" evidence="2">
    <location>
        <position position="87"/>
    </location>
</feature>
<feature type="disulfide bond" evidence="2 24 25 26">
    <location>
        <begin position="54"/>
        <end position="69"/>
    </location>
</feature>
<feature type="disulfide bond" evidence="2 24 25 26">
    <location>
        <begin position="61"/>
        <end position="76"/>
    </location>
</feature>
<feature type="disulfide bond" evidence="2 24 25 26">
    <location>
        <begin position="68"/>
        <end position="83"/>
    </location>
</feature>
<feature type="mutagenesis site" description="6-fold increase in ability to inhibit hNav1.7/SCN9A. 28-fold increase in ability to inhibit hNav1.7/SCN9A; when associated with W-85." evidence="7">
    <original>ECLE</original>
    <variation>ACLA</variation>
    <location>
        <begin position="53"/>
        <end position="56"/>
    </location>
</feature>
<feature type="mutagenesis site" description="34-fold increase in ability to inhibit hNav1.7/SCN9A. In m3-huwentoxin-IV; 43-fold increase in ability to inhibit hNav1.7/SCN9A. In m3-huwentoxin-IV; potently inhibits Nav1.1/SCN1A, Nav1.2/SCN2A, Nav1.3/SCN3A, Nav1.6/SCN8A and Nav1.7/SCN9A. In gHuwentoxin-IV; shows higher affinity for lipid membranes and a 4-fold increase in ability to inhibit hNav1.7/SCN9A compared to both huwentoxin-IV and mhuwentoxin-IV." evidence="7 11 12">
    <original>ECLE</original>
    <variation>GCLG</variation>
    <location>
        <begin position="53"/>
        <end position="56"/>
    </location>
</feature>
<feature type="mutagenesis site" description="2.8-fold increase in ability to inhibit hNav1.7/SCN9A, and no change in activity on hNav1.5/SCN5A." evidence="7">
    <original>E</original>
    <variation>A</variation>
    <location>
        <position position="53"/>
    </location>
</feature>
<feature type="mutagenesis site" description="No change in activity on both Nav1.2/SCN2A and hNav1.5/SCN5A, and controversial activity on Nav1.7/SCN9A. Small increase in ability to inhibit Nav1.7/SCN9A (according to PMID:23760503), and 1.5-fold decrease in ability to inhibit hNav1.7/SCN9A (according to PMID:23523779)." evidence="7 8">
    <original>E</original>
    <variation>A</variation>
    <location>
        <position position="56"/>
    </location>
</feature>
<feature type="mutagenesis site" description="Important decrease in ability to inhibit Nav1.2/SCN2A, and small decrease in ability to inhibit Nav1.7/SCN9A." evidence="8">
    <original>F</original>
    <variation>A</variation>
    <location>
        <position position="58"/>
    </location>
</feature>
<feature type="mutagenesis site" description="In gHuwentoxin-IV; shows higher affinity for lipid membranes and a 4-fold increase in ability to inhibit hNav1.7/SCN9A compared to both huwentoxin-IV and mhuwentoxin-IV." evidence="11">
    <original>F</original>
    <variation>W</variation>
    <location>
        <position position="58"/>
    </location>
</feature>
<feature type="mutagenesis site" description="Important decrease in ability to inhibit both Nav1.2/SCN2A and Nav1.7/SCN9A." evidence="8">
    <original>P</original>
    <variation>A</variation>
    <location>
        <position position="63"/>
    </location>
</feature>
<feature type="mutagenesis site" description="Important decrease in ability to inhibit both Nav1.2/SCN2A and Nav1.7/SCN9A." evidence="8">
    <original>D</original>
    <variation>A</variation>
    <location>
        <position position="66"/>
    </location>
</feature>
<feature type="mutagenesis site" description="Important decrease in ability to inhibit both Nav1.2/SCN2A and Nav1.7/SCN9A." evidence="8">
    <original>L</original>
    <variation>A</variation>
    <location>
        <position position="74"/>
    </location>
</feature>
<feature type="mutagenesis site" description="Important decrease in ability to inhibit both Nav1.2/SCN2A and Nav1.7/SCN9A." evidence="8">
    <original>S</original>
    <variation>A</variation>
    <location>
        <position position="77"/>
    </location>
</feature>
<feature type="mutagenesis site" description="Important decrease in ability to inhibit Nav1.2/SCN2A, and no change in activity on Nav1.7/SCN9A." evidence="8">
    <original>R</original>
    <variation>A</variation>
    <location>
        <position position="78"/>
    </location>
</feature>
<feature type="mutagenesis site" description="Important decrease in ability to inhibit Nav1.2/SCN2A, and no change in activity on Nav1.7/SCN9A." evidence="8">
    <original>K</original>
    <variation>A</variation>
    <location>
        <position position="79"/>
    </location>
</feature>
<feature type="mutagenesis site" description="Small decrease in ability to inhibit Nav1.2/SCN2A, and no change in activity on Nav1.7/SCN9A." evidence="8">
    <original>R</original>
    <variation>A</variation>
    <location>
        <position position="81"/>
    </location>
</feature>
<feature type="mutagenesis site" description="Almost complete loss in ability to inhibit both Nav1.2/SCN2A and Nav1.7/SCN9A." evidence="8">
    <original>W</original>
    <variation>A</variation>
    <location>
        <position position="82"/>
    </location>
</feature>
<feature type="mutagenesis site" description="Almost complete loss in ability to inhibit both Nav1.2/SCN2A and Nav1.7/SCN9A." evidence="8">
    <original>K</original>
    <variation>A</variation>
    <location>
        <position position="84"/>
    </location>
</feature>
<feature type="mutagenesis site" description="Important decrease in ability to inhibit both Nav1.2/SCN2A and Nav1.7/SCN9A." evidence="8">
    <original>Y</original>
    <variation>A</variation>
    <location>
        <position position="85"/>
    </location>
</feature>
<feature type="mutagenesis site" description="12-fold increase in ability to inhibit hNav1.7/SCN9A, and no change in activity on hNav1.5/SCN5A. In m3-huwentoxin-IV; 43-fold increase in ability to inhibit hNav1.7/SCN9A. In m3-huwentoxin-IV; potently inhibits Nav1.1/SCN1A, Nav1.2/SCN2A, Nav1.3/SCN3A, Nav1.6/SCN8A and Nav1.7/SCN9A. In gHuwentoxin-IV; shows higher affinity for lipid membranes and a 4-fold increase in ability to inhibit hNav1.7/SCN9A compared to both huwentoxin-IV and mhuwentoxin-IV." evidence="7 11 12">
    <original>Y</original>
    <variation>W</variation>
    <location>
        <position position="85"/>
    </location>
</feature>
<feature type="mutagenesis site" description="Small decrease in ability to inhibit both Nav1.2/SCN2A and Nav1.7/SCN9A." evidence="8">
    <original>I</original>
    <variation>A</variation>
    <location>
        <position position="87"/>
    </location>
</feature>
<feature type="sequence conflict" description="In Ref. 2; ABY77746." evidence="19" ref="2">
    <original>L</original>
    <variation>Q</variation>
    <location>
        <position position="17"/>
    </location>
</feature>
<feature type="sequence conflict" description="In Ref. 2; ABY77745." evidence="19" ref="2">
    <original>Y</original>
    <variation>C</variation>
    <location>
        <position position="85"/>
    </location>
</feature>
<feature type="strand" evidence="27">
    <location>
        <begin position="57"/>
        <end position="60"/>
    </location>
</feature>
<feature type="strand" evidence="28">
    <location>
        <begin position="63"/>
        <end position="65"/>
    </location>
</feature>
<feature type="turn" evidence="28">
    <location>
        <begin position="70"/>
        <end position="73"/>
    </location>
</feature>
<feature type="strand" evidence="28">
    <location>
        <begin position="74"/>
        <end position="76"/>
    </location>
</feature>
<feature type="strand" evidence="28">
    <location>
        <begin position="78"/>
        <end position="85"/>
    </location>
</feature>
<proteinExistence type="evidence at protein level"/>
<organism>
    <name type="scientific">Cyriopagopus schmidti</name>
    <name type="common">Chinese bird spider</name>
    <name type="synonym">Haplopelma schmidti</name>
    <dbReference type="NCBI Taxonomy" id="29017"/>
    <lineage>
        <taxon>Eukaryota</taxon>
        <taxon>Metazoa</taxon>
        <taxon>Ecdysozoa</taxon>
        <taxon>Arthropoda</taxon>
        <taxon>Chelicerata</taxon>
        <taxon>Arachnida</taxon>
        <taxon>Araneae</taxon>
        <taxon>Mygalomorphae</taxon>
        <taxon>Theraphosidae</taxon>
        <taxon>Cyriopagopus</taxon>
    </lineage>
</organism>
<protein>
    <recommendedName>
        <fullName evidence="14">Huwentoxin-IV</fullName>
        <shortName evidence="14 16">HwTx-IV</shortName>
    </recommendedName>
    <alternativeName>
        <fullName evidence="17">Huwentoxin-4</fullName>
    </alternativeName>
    <alternativeName>
        <fullName evidence="21">Huwentoxin-IVa</fullName>
        <shortName evidence="21">HWTX-IVa</shortName>
    </alternativeName>
    <alternativeName>
        <fullName evidence="22">Huwentoxin-IVb</fullName>
        <shortName evidence="22">HWTX-IVb</shortName>
    </alternativeName>
    <alternativeName>
        <fullName evidence="23">Huwentoxin-IVc</fullName>
        <shortName evidence="23">HWTX-IVc</shortName>
    </alternativeName>
    <alternativeName>
        <fullName evidence="15">Mu-theraphotoxin-Hs2a</fullName>
        <shortName evidence="15">Mu-TRTX-Hs2a</shortName>
    </alternativeName>
</protein>
<dbReference type="EMBL" id="AY263707">
    <property type="protein sequence ID" value="AAP33074.1"/>
    <property type="molecule type" value="mRNA"/>
</dbReference>
<dbReference type="EMBL" id="EU195291">
    <property type="protein sequence ID" value="ABY77744.1"/>
    <property type="molecule type" value="mRNA"/>
</dbReference>
<dbReference type="EMBL" id="EU195292">
    <property type="protein sequence ID" value="ABY77745.1"/>
    <property type="molecule type" value="mRNA"/>
</dbReference>
<dbReference type="EMBL" id="EU195293">
    <property type="protein sequence ID" value="ABY77746.1"/>
    <property type="molecule type" value="mRNA"/>
</dbReference>
<dbReference type="PDB" id="1MB6">
    <property type="method" value="NMR"/>
    <property type="chains" value="A=53-87"/>
</dbReference>
<dbReference type="PDB" id="2M4X">
    <property type="method" value="NMR"/>
    <property type="chains" value="A=53-87"/>
</dbReference>
<dbReference type="PDB" id="2M4Z">
    <property type="method" value="NMR"/>
    <property type="chains" value="A=53-87"/>
</dbReference>
<dbReference type="PDB" id="2M50">
    <property type="method" value="NMR"/>
    <property type="chains" value="A=53-87"/>
</dbReference>
<dbReference type="PDB" id="5T3M">
    <property type="method" value="NMR"/>
    <property type="chains" value="A=53-87"/>
</dbReference>
<dbReference type="PDB" id="5TLR">
    <property type="method" value="NMR"/>
    <property type="chains" value="A=53-87"/>
</dbReference>
<dbReference type="PDB" id="6W6O">
    <property type="method" value="EM"/>
    <property type="resolution" value="3.20 A"/>
    <property type="chains" value="C/E/G/I=53-87"/>
</dbReference>
<dbReference type="PDB" id="7K48">
    <property type="method" value="EM"/>
    <property type="resolution" value="3.60 A"/>
    <property type="chains" value="E/F/G/H=53-87"/>
</dbReference>
<dbReference type="PDBsum" id="1MB6"/>
<dbReference type="PDBsum" id="2M4X"/>
<dbReference type="PDBsum" id="2M4Z"/>
<dbReference type="PDBsum" id="2M50"/>
<dbReference type="PDBsum" id="5T3M"/>
<dbReference type="PDBsum" id="5TLR"/>
<dbReference type="PDBsum" id="6W6O"/>
<dbReference type="PDBsum" id="7K48"/>
<dbReference type="BMRB" id="P83303"/>
<dbReference type="EMDB" id="EMD-21560"/>
<dbReference type="EMDB" id="EMD-22661"/>
<dbReference type="SMR" id="P83303"/>
<dbReference type="TCDB" id="8.B.3.1.3">
    <property type="family name" value="the huwentoxin-1 (huwentoxin-1) family"/>
</dbReference>
<dbReference type="ArachnoServer" id="AS000332">
    <property type="toxin name" value="mu-theraphotoxin-Hs2a"/>
</dbReference>
<dbReference type="EvolutionaryTrace" id="P83303"/>
<dbReference type="GO" id="GO:0005576">
    <property type="term" value="C:extracellular region"/>
    <property type="evidence" value="ECO:0007669"/>
    <property type="project" value="UniProtKB-SubCell"/>
</dbReference>
<dbReference type="GO" id="GO:0044231">
    <property type="term" value="C:host cell presynaptic membrane"/>
    <property type="evidence" value="ECO:0007669"/>
    <property type="project" value="UniProtKB-KW"/>
</dbReference>
<dbReference type="GO" id="GO:0008200">
    <property type="term" value="F:ion channel inhibitor activity"/>
    <property type="evidence" value="ECO:0007669"/>
    <property type="project" value="InterPro"/>
</dbReference>
<dbReference type="GO" id="GO:0017080">
    <property type="term" value="F:sodium channel regulator activity"/>
    <property type="evidence" value="ECO:0007669"/>
    <property type="project" value="UniProtKB-KW"/>
</dbReference>
<dbReference type="GO" id="GO:0090729">
    <property type="term" value="F:toxin activity"/>
    <property type="evidence" value="ECO:0007669"/>
    <property type="project" value="UniProtKB-KW"/>
</dbReference>
<dbReference type="InterPro" id="IPR011696">
    <property type="entry name" value="Huwentoxin-1"/>
</dbReference>
<dbReference type="InterPro" id="IPR013140">
    <property type="entry name" value="Huwentoxin_CS1"/>
</dbReference>
<dbReference type="Pfam" id="PF07740">
    <property type="entry name" value="Toxin_12"/>
    <property type="match status" value="1"/>
</dbReference>
<dbReference type="SUPFAM" id="SSF57059">
    <property type="entry name" value="omega toxin-like"/>
    <property type="match status" value="1"/>
</dbReference>
<dbReference type="PROSITE" id="PS60021">
    <property type="entry name" value="HWTX_1"/>
    <property type="match status" value="1"/>
</dbReference>